<keyword id="KW-0010">Activator</keyword>
<keyword id="KW-0369">Histidine metabolism</keyword>
<keyword id="KW-0694">RNA-binding</keyword>
<keyword id="KW-0804">Transcription</keyword>
<keyword id="KW-0805">Transcription regulation</keyword>
<proteinExistence type="inferred from homology"/>
<sequence>MLLQGTHRIGRMAMLLALADQNESPVLSIPKGWKYCTGKVGSMNSQKVVAAMETAAKSNQVIETDVYRETHALYHAIMEALYGVTRGQIQLADVLRTVGLRFAIVRGTPYDGKKEGEWVAVALYGTIGAPVKGSEHEAIGLGINHI</sequence>
<evidence type="ECO:0000255" key="1">
    <source>
        <dbReference type="HAMAP-Rule" id="MF_00779"/>
    </source>
</evidence>
<gene>
    <name evidence="1" type="primary">hutP</name>
    <name type="ordered locus">BCAH820_3663</name>
</gene>
<name>HUTP_BACC0</name>
<feature type="chain" id="PRO_1000148459" description="Hut operon positive regulatory protein">
    <location>
        <begin position="1"/>
        <end position="146"/>
    </location>
</feature>
<protein>
    <recommendedName>
        <fullName evidence="1">Hut operon positive regulatory protein</fullName>
    </recommendedName>
</protein>
<reference key="1">
    <citation type="submission" date="2008-10" db="EMBL/GenBank/DDBJ databases">
        <title>Genome sequence of Bacillus cereus AH820.</title>
        <authorList>
            <person name="Dodson R.J."/>
            <person name="Durkin A.S."/>
            <person name="Rosovitz M.J."/>
            <person name="Rasko D.A."/>
            <person name="Hoffmaster A."/>
            <person name="Ravel J."/>
            <person name="Sutton G."/>
        </authorList>
    </citation>
    <scope>NUCLEOTIDE SEQUENCE [LARGE SCALE GENOMIC DNA]</scope>
    <source>
        <strain>AH820</strain>
    </source>
</reference>
<comment type="function">
    <text evidence="1">Antiterminator that binds to cis-acting regulatory sequences on the mRNA in the presence of histidine, thereby suppressing transcription termination and activating the hut operon for histidine utilization.</text>
</comment>
<comment type="subunit">
    <text evidence="1">Homohexamer.</text>
</comment>
<comment type="similarity">
    <text evidence="1">Belongs to the HutP family.</text>
</comment>
<organism>
    <name type="scientific">Bacillus cereus (strain AH820)</name>
    <dbReference type="NCBI Taxonomy" id="405535"/>
    <lineage>
        <taxon>Bacteria</taxon>
        <taxon>Bacillati</taxon>
        <taxon>Bacillota</taxon>
        <taxon>Bacilli</taxon>
        <taxon>Bacillales</taxon>
        <taxon>Bacillaceae</taxon>
        <taxon>Bacillus</taxon>
        <taxon>Bacillus cereus group</taxon>
    </lineage>
</organism>
<dbReference type="EMBL" id="CP001283">
    <property type="protein sequence ID" value="ACK88789.1"/>
    <property type="molecule type" value="Genomic_DNA"/>
</dbReference>
<dbReference type="RefSeq" id="WP_000926522.1">
    <property type="nucleotide sequence ID" value="NC_011773.1"/>
</dbReference>
<dbReference type="SMR" id="B7JI81"/>
<dbReference type="KEGG" id="bcu:BCAH820_3663"/>
<dbReference type="HOGENOM" id="CLU_148478_0_0_9"/>
<dbReference type="Proteomes" id="UP000001363">
    <property type="component" value="Chromosome"/>
</dbReference>
<dbReference type="GO" id="GO:0003729">
    <property type="term" value="F:mRNA binding"/>
    <property type="evidence" value="ECO:0007669"/>
    <property type="project" value="UniProtKB-UniRule"/>
</dbReference>
<dbReference type="GO" id="GO:0006547">
    <property type="term" value="P:L-histidine metabolic process"/>
    <property type="evidence" value="ECO:0007669"/>
    <property type="project" value="UniProtKB-UniRule"/>
</dbReference>
<dbReference type="GO" id="GO:0010628">
    <property type="term" value="P:positive regulation of gene expression"/>
    <property type="evidence" value="ECO:0007669"/>
    <property type="project" value="UniProtKB-UniRule"/>
</dbReference>
<dbReference type="FunFam" id="3.40.1510.10:FF:000001">
    <property type="entry name" value="Hut operon positive regulatory protein"/>
    <property type="match status" value="1"/>
</dbReference>
<dbReference type="Gene3D" id="3.40.1510.10">
    <property type="entry name" value="Hut operon regulatory protein HutP"/>
    <property type="match status" value="1"/>
</dbReference>
<dbReference type="HAMAP" id="MF_00779">
    <property type="entry name" value="HutP"/>
    <property type="match status" value="1"/>
</dbReference>
<dbReference type="InterPro" id="IPR015111">
    <property type="entry name" value="Regulatory_HutP"/>
</dbReference>
<dbReference type="InterPro" id="IPR023552">
    <property type="entry name" value="Regulatory_HutP_bacillales"/>
</dbReference>
<dbReference type="InterPro" id="IPR036482">
    <property type="entry name" value="Regulatory_HutP_sf"/>
</dbReference>
<dbReference type="NCBIfam" id="NF002838">
    <property type="entry name" value="PRK03065.1"/>
    <property type="match status" value="1"/>
</dbReference>
<dbReference type="Pfam" id="PF09021">
    <property type="entry name" value="HutP"/>
    <property type="match status" value="1"/>
</dbReference>
<dbReference type="SUPFAM" id="SSF111064">
    <property type="entry name" value="Hut operon positive regulatory protein HutP"/>
    <property type="match status" value="1"/>
</dbReference>
<accession>B7JI81</accession>